<evidence type="ECO:0000255" key="1">
    <source>
        <dbReference type="HAMAP-Rule" id="MF_00091"/>
    </source>
</evidence>
<feature type="chain" id="PRO_1000117215" description="S-ribosylhomocysteine lyase">
    <location>
        <begin position="1"/>
        <end position="157"/>
    </location>
</feature>
<feature type="binding site" evidence="1">
    <location>
        <position position="54"/>
    </location>
    <ligand>
        <name>Fe cation</name>
        <dbReference type="ChEBI" id="CHEBI:24875"/>
    </ligand>
</feature>
<feature type="binding site" evidence="1">
    <location>
        <position position="58"/>
    </location>
    <ligand>
        <name>Fe cation</name>
        <dbReference type="ChEBI" id="CHEBI:24875"/>
    </ligand>
</feature>
<feature type="binding site" evidence="1">
    <location>
        <position position="126"/>
    </location>
    <ligand>
        <name>Fe cation</name>
        <dbReference type="ChEBI" id="CHEBI:24875"/>
    </ligand>
</feature>
<dbReference type="EC" id="4.4.1.21" evidence="1"/>
<dbReference type="EMBL" id="CP001177">
    <property type="protein sequence ID" value="ACJ78667.1"/>
    <property type="molecule type" value="Genomic_DNA"/>
</dbReference>
<dbReference type="SMR" id="B7HTQ2"/>
<dbReference type="KEGG" id="bcr:BCAH187_A4931"/>
<dbReference type="HOGENOM" id="CLU_107531_2_0_9"/>
<dbReference type="Proteomes" id="UP000002214">
    <property type="component" value="Chromosome"/>
</dbReference>
<dbReference type="GO" id="GO:0005506">
    <property type="term" value="F:iron ion binding"/>
    <property type="evidence" value="ECO:0007669"/>
    <property type="project" value="InterPro"/>
</dbReference>
<dbReference type="GO" id="GO:0043768">
    <property type="term" value="F:S-ribosylhomocysteine lyase activity"/>
    <property type="evidence" value="ECO:0007669"/>
    <property type="project" value="UniProtKB-UniRule"/>
</dbReference>
<dbReference type="GO" id="GO:0009372">
    <property type="term" value="P:quorum sensing"/>
    <property type="evidence" value="ECO:0007669"/>
    <property type="project" value="UniProtKB-UniRule"/>
</dbReference>
<dbReference type="Gene3D" id="3.30.1360.80">
    <property type="entry name" value="S-ribosylhomocysteinase (LuxS)"/>
    <property type="match status" value="1"/>
</dbReference>
<dbReference type="HAMAP" id="MF_00091">
    <property type="entry name" value="LuxS"/>
    <property type="match status" value="1"/>
</dbReference>
<dbReference type="InterPro" id="IPR037005">
    <property type="entry name" value="LuxS_sf"/>
</dbReference>
<dbReference type="InterPro" id="IPR011249">
    <property type="entry name" value="Metalloenz_LuxS/M16"/>
</dbReference>
<dbReference type="InterPro" id="IPR003815">
    <property type="entry name" value="S-ribosylhomocysteinase"/>
</dbReference>
<dbReference type="NCBIfam" id="NF002603">
    <property type="entry name" value="PRK02260.1-3"/>
    <property type="match status" value="1"/>
</dbReference>
<dbReference type="PANTHER" id="PTHR35799">
    <property type="entry name" value="S-RIBOSYLHOMOCYSTEINE LYASE"/>
    <property type="match status" value="1"/>
</dbReference>
<dbReference type="PANTHER" id="PTHR35799:SF1">
    <property type="entry name" value="S-RIBOSYLHOMOCYSTEINE LYASE"/>
    <property type="match status" value="1"/>
</dbReference>
<dbReference type="Pfam" id="PF02664">
    <property type="entry name" value="LuxS"/>
    <property type="match status" value="1"/>
</dbReference>
<dbReference type="PIRSF" id="PIRSF006160">
    <property type="entry name" value="AI2"/>
    <property type="match status" value="1"/>
</dbReference>
<dbReference type="PRINTS" id="PR01487">
    <property type="entry name" value="LUXSPROTEIN"/>
</dbReference>
<dbReference type="SUPFAM" id="SSF63411">
    <property type="entry name" value="LuxS/MPP-like metallohydrolase"/>
    <property type="match status" value="1"/>
</dbReference>
<proteinExistence type="inferred from homology"/>
<sequence length="157" mass="17856">MPSVESFELDHTIVKAPYVRHCGVHNVGSDGIVNKFDIRFCQPNKQAMKPDVIHTLEHLLAFNLRKYIDRYPHFDIIDISPMGCQTGYYLVVSGTPTVREIIDLLELTLKDAVQITEIPAANETQCGQAKLHDLEGAKRLMNFWLSQDKDELEKVFG</sequence>
<protein>
    <recommendedName>
        <fullName evidence="1">S-ribosylhomocysteine lyase</fullName>
        <ecNumber evidence="1">4.4.1.21</ecNumber>
    </recommendedName>
    <alternativeName>
        <fullName evidence="1">AI-2 synthesis protein</fullName>
    </alternativeName>
    <alternativeName>
        <fullName evidence="1">Autoinducer-2 production protein LuxS</fullName>
    </alternativeName>
</protein>
<organism>
    <name type="scientific">Bacillus cereus (strain AH187)</name>
    <dbReference type="NCBI Taxonomy" id="405534"/>
    <lineage>
        <taxon>Bacteria</taxon>
        <taxon>Bacillati</taxon>
        <taxon>Bacillota</taxon>
        <taxon>Bacilli</taxon>
        <taxon>Bacillales</taxon>
        <taxon>Bacillaceae</taxon>
        <taxon>Bacillus</taxon>
        <taxon>Bacillus cereus group</taxon>
    </lineage>
</organism>
<accession>B7HTQ2</accession>
<reference key="1">
    <citation type="submission" date="2008-10" db="EMBL/GenBank/DDBJ databases">
        <title>Genome sequence of Bacillus cereus AH187.</title>
        <authorList>
            <person name="Dodson R.J."/>
            <person name="Durkin A.S."/>
            <person name="Rosovitz M.J."/>
            <person name="Rasko D.A."/>
            <person name="Kolsto A.B."/>
            <person name="Okstad O.A."/>
            <person name="Ravel J."/>
            <person name="Sutton G."/>
        </authorList>
    </citation>
    <scope>NUCLEOTIDE SEQUENCE [LARGE SCALE GENOMIC DNA]</scope>
    <source>
        <strain>AH187</strain>
    </source>
</reference>
<keyword id="KW-0071">Autoinducer synthesis</keyword>
<keyword id="KW-0408">Iron</keyword>
<keyword id="KW-0456">Lyase</keyword>
<keyword id="KW-0479">Metal-binding</keyword>
<keyword id="KW-0673">Quorum sensing</keyword>
<comment type="function">
    <text evidence="1">Involved in the synthesis of autoinducer 2 (AI-2) which is secreted by bacteria and is used to communicate both the cell density and the metabolic potential of the environment. The regulation of gene expression in response to changes in cell density is called quorum sensing. Catalyzes the transformation of S-ribosylhomocysteine (RHC) to homocysteine (HC) and 4,5-dihydroxy-2,3-pentadione (DPD).</text>
</comment>
<comment type="catalytic activity">
    <reaction evidence="1">
        <text>S-(5-deoxy-D-ribos-5-yl)-L-homocysteine = (S)-4,5-dihydroxypentane-2,3-dione + L-homocysteine</text>
        <dbReference type="Rhea" id="RHEA:17753"/>
        <dbReference type="ChEBI" id="CHEBI:29484"/>
        <dbReference type="ChEBI" id="CHEBI:58195"/>
        <dbReference type="ChEBI" id="CHEBI:58199"/>
        <dbReference type="EC" id="4.4.1.21"/>
    </reaction>
</comment>
<comment type="cofactor">
    <cofactor evidence="1">
        <name>Fe cation</name>
        <dbReference type="ChEBI" id="CHEBI:24875"/>
    </cofactor>
    <text evidence="1">Binds 1 Fe cation per subunit.</text>
</comment>
<comment type="subunit">
    <text evidence="1">Homodimer.</text>
</comment>
<comment type="similarity">
    <text evidence="1">Belongs to the LuxS family.</text>
</comment>
<gene>
    <name evidence="1" type="primary">luxS</name>
    <name type="ordered locus">BCAH187_A4931</name>
</gene>
<name>LUXS_BACC7</name>